<dbReference type="EMBL" id="BA000003">
    <property type="protein sequence ID" value="BAB12840.1"/>
    <property type="molecule type" value="Genomic_DNA"/>
</dbReference>
<dbReference type="RefSeq" id="NP_239954.1">
    <property type="nucleotide sequence ID" value="NC_002528.1"/>
</dbReference>
<dbReference type="RefSeq" id="WP_009874078.1">
    <property type="nucleotide sequence ID" value="NC_002528.1"/>
</dbReference>
<dbReference type="SMR" id="P57222"/>
<dbReference type="STRING" id="563178.BUAP5A_120"/>
<dbReference type="EnsemblBacteria" id="BAB12840">
    <property type="protein sequence ID" value="BAB12840"/>
    <property type="gene ID" value="BAB12840"/>
</dbReference>
<dbReference type="KEGG" id="buc:BU122"/>
<dbReference type="PATRIC" id="fig|107806.10.peg.131"/>
<dbReference type="eggNOG" id="COG0316">
    <property type="taxonomic scope" value="Bacteria"/>
</dbReference>
<dbReference type="HOGENOM" id="CLU_069054_4_2_6"/>
<dbReference type="BioCyc" id="BAPH107806:GBZJ-121-MONOMER"/>
<dbReference type="Proteomes" id="UP000001806">
    <property type="component" value="Chromosome"/>
</dbReference>
<dbReference type="GO" id="GO:0005829">
    <property type="term" value="C:cytosol"/>
    <property type="evidence" value="ECO:0007669"/>
    <property type="project" value="TreeGrafter"/>
</dbReference>
<dbReference type="GO" id="GO:0051537">
    <property type="term" value="F:2 iron, 2 sulfur cluster binding"/>
    <property type="evidence" value="ECO:0007669"/>
    <property type="project" value="TreeGrafter"/>
</dbReference>
<dbReference type="GO" id="GO:0016226">
    <property type="term" value="P:iron-sulfur cluster assembly"/>
    <property type="evidence" value="ECO:0007669"/>
    <property type="project" value="InterPro"/>
</dbReference>
<dbReference type="Gene3D" id="2.60.300.12">
    <property type="entry name" value="HesB-like domain"/>
    <property type="match status" value="1"/>
</dbReference>
<dbReference type="InterPro" id="IPR050322">
    <property type="entry name" value="Fe-S_cluster_asmbl/transfer"/>
</dbReference>
<dbReference type="InterPro" id="IPR000361">
    <property type="entry name" value="FeS_biogenesis"/>
</dbReference>
<dbReference type="InterPro" id="IPR016092">
    <property type="entry name" value="FeS_cluster_insertion"/>
</dbReference>
<dbReference type="InterPro" id="IPR017870">
    <property type="entry name" value="FeS_cluster_insertion_CS"/>
</dbReference>
<dbReference type="InterPro" id="IPR035903">
    <property type="entry name" value="HesB-like_dom_sf"/>
</dbReference>
<dbReference type="NCBIfam" id="TIGR00049">
    <property type="entry name" value="iron-sulfur cluster assembly accessory protein"/>
    <property type="match status" value="1"/>
</dbReference>
<dbReference type="PANTHER" id="PTHR10072:SF41">
    <property type="entry name" value="IRON-SULFUR CLUSTER ASSEMBLY 1 HOMOLOG, MITOCHONDRIAL"/>
    <property type="match status" value="1"/>
</dbReference>
<dbReference type="PANTHER" id="PTHR10072">
    <property type="entry name" value="IRON-SULFUR CLUSTER ASSEMBLY PROTEIN"/>
    <property type="match status" value="1"/>
</dbReference>
<dbReference type="Pfam" id="PF01521">
    <property type="entry name" value="Fe-S_biosyn"/>
    <property type="match status" value="1"/>
</dbReference>
<dbReference type="SUPFAM" id="SSF89360">
    <property type="entry name" value="HesB-like domain"/>
    <property type="match status" value="1"/>
</dbReference>
<dbReference type="PROSITE" id="PS01152">
    <property type="entry name" value="HESB"/>
    <property type="match status" value="1"/>
</dbReference>
<organism>
    <name type="scientific">Buchnera aphidicola subsp. Acyrthosiphon pisum (strain APS)</name>
    <name type="common">Acyrthosiphon pisum symbiotic bacterium</name>
    <dbReference type="NCBI Taxonomy" id="107806"/>
    <lineage>
        <taxon>Bacteria</taxon>
        <taxon>Pseudomonadati</taxon>
        <taxon>Pseudomonadota</taxon>
        <taxon>Gammaproteobacteria</taxon>
        <taxon>Enterobacterales</taxon>
        <taxon>Erwiniaceae</taxon>
        <taxon>Buchnera</taxon>
    </lineage>
</organism>
<keyword id="KW-1185">Reference proteome</keyword>
<proteinExistence type="inferred from homology"/>
<accession>P57222</accession>
<protein>
    <recommendedName>
        <fullName>Uncharacterized protein BU122</fullName>
    </recommendedName>
</protein>
<comment type="similarity">
    <text evidence="1">Belongs to the HesB/IscA family.</text>
</comment>
<reference key="1">
    <citation type="journal article" date="2000" name="Nature">
        <title>Genome sequence of the endocellular bacterial symbiont of aphids Buchnera sp. APS.</title>
        <authorList>
            <person name="Shigenobu S."/>
            <person name="Watanabe H."/>
            <person name="Hattori M."/>
            <person name="Sakaki Y."/>
            <person name="Ishikawa H."/>
        </authorList>
    </citation>
    <scope>NUCLEOTIDE SEQUENCE [LARGE SCALE GENOMIC DNA]</scope>
    <source>
        <strain>APS</strain>
    </source>
</reference>
<sequence length="130" mass="15204">MNKNEVKTYLLKKNTFQNISITKDAIEQILFLINLNSDNIGIRLSIKKSGCAGFRYSMKLLKASELKKEKDEKEVSFFYQNILIYIYSKDIPFLEGIRIDFVKNNINKIFKFYNTKLEKFCGCGESFSIN</sequence>
<name>Y122_BUCAI</name>
<gene>
    <name type="ordered locus">BU122</name>
</gene>
<evidence type="ECO:0000305" key="1"/>
<feature type="chain" id="PRO_0000077012" description="Uncharacterized protein BU122">
    <location>
        <begin position="1"/>
        <end position="130"/>
    </location>
</feature>